<accession>B5XS13</accession>
<protein>
    <recommendedName>
        <fullName evidence="1">GTP cyclohydrolase-2</fullName>
        <ecNumber evidence="1">3.5.4.25</ecNumber>
    </recommendedName>
    <alternativeName>
        <fullName evidence="1">GTP cyclohydrolase II</fullName>
    </alternativeName>
</protein>
<evidence type="ECO:0000255" key="1">
    <source>
        <dbReference type="HAMAP-Rule" id="MF_00179"/>
    </source>
</evidence>
<name>RIBA_KLEP3</name>
<sequence>MQLKRVAEAKLPTPWGDFLMVGFEELATGQDHVALVYGDISGQSPVLARVHSECLTGDALFSLRCDCGFQLEAALSHIAEEGRGILLYHRQEGRNIGLLNKIRAYALQDQGYDTVEANHQLGFAADERDFTLCADMFKLLNVEQVRLLTNNPKKVEILTEAGINIVERVPLIVGRNPKNAHYLDTKAAKMGHLLNSKPAE</sequence>
<feature type="chain" id="PRO_1000098269" description="GTP cyclohydrolase-2">
    <location>
        <begin position="1"/>
        <end position="200"/>
    </location>
</feature>
<feature type="active site" description="Proton acceptor" evidence="1">
    <location>
        <position position="126"/>
    </location>
</feature>
<feature type="active site" description="Nucleophile" evidence="1">
    <location>
        <position position="128"/>
    </location>
</feature>
<feature type="binding site" evidence="1">
    <location>
        <begin position="49"/>
        <end position="53"/>
    </location>
    <ligand>
        <name>GTP</name>
        <dbReference type="ChEBI" id="CHEBI:37565"/>
    </ligand>
</feature>
<feature type="binding site" evidence="1">
    <location>
        <position position="54"/>
    </location>
    <ligand>
        <name>Zn(2+)</name>
        <dbReference type="ChEBI" id="CHEBI:29105"/>
        <note>catalytic</note>
    </ligand>
</feature>
<feature type="binding site" evidence="1">
    <location>
        <position position="65"/>
    </location>
    <ligand>
        <name>Zn(2+)</name>
        <dbReference type="ChEBI" id="CHEBI:29105"/>
        <note>catalytic</note>
    </ligand>
</feature>
<feature type="binding site" evidence="1">
    <location>
        <position position="67"/>
    </location>
    <ligand>
        <name>Zn(2+)</name>
        <dbReference type="ChEBI" id="CHEBI:29105"/>
        <note>catalytic</note>
    </ligand>
</feature>
<feature type="binding site" evidence="1">
    <location>
        <position position="70"/>
    </location>
    <ligand>
        <name>GTP</name>
        <dbReference type="ChEBI" id="CHEBI:37565"/>
    </ligand>
</feature>
<feature type="binding site" evidence="1">
    <location>
        <begin position="92"/>
        <end position="94"/>
    </location>
    <ligand>
        <name>GTP</name>
        <dbReference type="ChEBI" id="CHEBI:37565"/>
    </ligand>
</feature>
<feature type="binding site" evidence="1">
    <location>
        <position position="114"/>
    </location>
    <ligand>
        <name>GTP</name>
        <dbReference type="ChEBI" id="CHEBI:37565"/>
    </ligand>
</feature>
<feature type="binding site" evidence="1">
    <location>
        <position position="149"/>
    </location>
    <ligand>
        <name>GTP</name>
        <dbReference type="ChEBI" id="CHEBI:37565"/>
    </ligand>
</feature>
<feature type="binding site" evidence="1">
    <location>
        <position position="154"/>
    </location>
    <ligand>
        <name>GTP</name>
        <dbReference type="ChEBI" id="CHEBI:37565"/>
    </ligand>
</feature>
<organism>
    <name type="scientific">Klebsiella pneumoniae (strain 342)</name>
    <dbReference type="NCBI Taxonomy" id="507522"/>
    <lineage>
        <taxon>Bacteria</taxon>
        <taxon>Pseudomonadati</taxon>
        <taxon>Pseudomonadota</taxon>
        <taxon>Gammaproteobacteria</taxon>
        <taxon>Enterobacterales</taxon>
        <taxon>Enterobacteriaceae</taxon>
        <taxon>Klebsiella/Raoultella group</taxon>
        <taxon>Klebsiella</taxon>
        <taxon>Klebsiella pneumoniae complex</taxon>
    </lineage>
</organism>
<reference key="1">
    <citation type="journal article" date="2008" name="PLoS Genet.">
        <title>Complete genome sequence of the N2-fixing broad host range endophyte Klebsiella pneumoniae 342 and virulence predictions verified in mice.</title>
        <authorList>
            <person name="Fouts D.E."/>
            <person name="Tyler H.L."/>
            <person name="DeBoy R.T."/>
            <person name="Daugherty S."/>
            <person name="Ren Q."/>
            <person name="Badger J.H."/>
            <person name="Durkin A.S."/>
            <person name="Huot H."/>
            <person name="Shrivastava S."/>
            <person name="Kothari S."/>
            <person name="Dodson R.J."/>
            <person name="Mohamoud Y."/>
            <person name="Khouri H."/>
            <person name="Roesch L.F.W."/>
            <person name="Krogfelt K.A."/>
            <person name="Struve C."/>
            <person name="Triplett E.W."/>
            <person name="Methe B.A."/>
        </authorList>
    </citation>
    <scope>NUCLEOTIDE SEQUENCE [LARGE SCALE GENOMIC DNA]</scope>
    <source>
        <strain>342</strain>
    </source>
</reference>
<keyword id="KW-0342">GTP-binding</keyword>
<keyword id="KW-0378">Hydrolase</keyword>
<keyword id="KW-0479">Metal-binding</keyword>
<keyword id="KW-0547">Nucleotide-binding</keyword>
<keyword id="KW-0686">Riboflavin biosynthesis</keyword>
<keyword id="KW-0862">Zinc</keyword>
<comment type="function">
    <text evidence="1">Catalyzes the conversion of GTP to 2,5-diamino-6-ribosylamino-4(3H)-pyrimidinone 5'-phosphate (DARP), formate and pyrophosphate.</text>
</comment>
<comment type="catalytic activity">
    <reaction evidence="1">
        <text>GTP + 4 H2O = 2,5-diamino-6-hydroxy-4-(5-phosphoribosylamino)-pyrimidine + formate + 2 phosphate + 3 H(+)</text>
        <dbReference type="Rhea" id="RHEA:23704"/>
        <dbReference type="ChEBI" id="CHEBI:15377"/>
        <dbReference type="ChEBI" id="CHEBI:15378"/>
        <dbReference type="ChEBI" id="CHEBI:15740"/>
        <dbReference type="ChEBI" id="CHEBI:37565"/>
        <dbReference type="ChEBI" id="CHEBI:43474"/>
        <dbReference type="ChEBI" id="CHEBI:58614"/>
        <dbReference type="EC" id="3.5.4.25"/>
    </reaction>
</comment>
<comment type="cofactor">
    <cofactor evidence="1">
        <name>Zn(2+)</name>
        <dbReference type="ChEBI" id="CHEBI:29105"/>
    </cofactor>
    <text evidence="1">Binds 1 zinc ion per subunit.</text>
</comment>
<comment type="pathway">
    <text evidence="1">Cofactor biosynthesis; riboflavin biosynthesis; 5-amino-6-(D-ribitylamino)uracil from GTP: step 1/4.</text>
</comment>
<comment type="subunit">
    <text evidence="1">Homodimer.</text>
</comment>
<comment type="similarity">
    <text evidence="1">Belongs to the GTP cyclohydrolase II family.</text>
</comment>
<dbReference type="EC" id="3.5.4.25" evidence="1"/>
<dbReference type="EMBL" id="CP000964">
    <property type="protein sequence ID" value="ACI08093.1"/>
    <property type="molecule type" value="Genomic_DNA"/>
</dbReference>
<dbReference type="SMR" id="B5XS13"/>
<dbReference type="KEGG" id="kpe:KPK_3161"/>
<dbReference type="HOGENOM" id="CLU_020273_2_1_6"/>
<dbReference type="UniPathway" id="UPA00275">
    <property type="reaction ID" value="UER00400"/>
</dbReference>
<dbReference type="Proteomes" id="UP000001734">
    <property type="component" value="Chromosome"/>
</dbReference>
<dbReference type="GO" id="GO:0005829">
    <property type="term" value="C:cytosol"/>
    <property type="evidence" value="ECO:0007669"/>
    <property type="project" value="TreeGrafter"/>
</dbReference>
<dbReference type="GO" id="GO:0005525">
    <property type="term" value="F:GTP binding"/>
    <property type="evidence" value="ECO:0007669"/>
    <property type="project" value="UniProtKB-KW"/>
</dbReference>
<dbReference type="GO" id="GO:0003935">
    <property type="term" value="F:GTP cyclohydrolase II activity"/>
    <property type="evidence" value="ECO:0007669"/>
    <property type="project" value="UniProtKB-UniRule"/>
</dbReference>
<dbReference type="GO" id="GO:0008270">
    <property type="term" value="F:zinc ion binding"/>
    <property type="evidence" value="ECO:0007669"/>
    <property type="project" value="UniProtKB-UniRule"/>
</dbReference>
<dbReference type="GO" id="GO:0009231">
    <property type="term" value="P:riboflavin biosynthetic process"/>
    <property type="evidence" value="ECO:0007669"/>
    <property type="project" value="UniProtKB-UniRule"/>
</dbReference>
<dbReference type="CDD" id="cd00641">
    <property type="entry name" value="GTP_cyclohydro2"/>
    <property type="match status" value="1"/>
</dbReference>
<dbReference type="FunFam" id="3.40.50.10990:FF:000002">
    <property type="entry name" value="GTP cyclohydrolase-2"/>
    <property type="match status" value="1"/>
</dbReference>
<dbReference type="Gene3D" id="3.40.50.10990">
    <property type="entry name" value="GTP cyclohydrolase II"/>
    <property type="match status" value="1"/>
</dbReference>
<dbReference type="HAMAP" id="MF_00179">
    <property type="entry name" value="RibA"/>
    <property type="match status" value="1"/>
</dbReference>
<dbReference type="InterPro" id="IPR032677">
    <property type="entry name" value="GTP_cyclohydro_II"/>
</dbReference>
<dbReference type="InterPro" id="IPR000926">
    <property type="entry name" value="RibA"/>
</dbReference>
<dbReference type="InterPro" id="IPR036144">
    <property type="entry name" value="RibA-like_sf"/>
</dbReference>
<dbReference type="NCBIfam" id="NF001591">
    <property type="entry name" value="PRK00393.1"/>
    <property type="match status" value="1"/>
</dbReference>
<dbReference type="NCBIfam" id="TIGR00505">
    <property type="entry name" value="ribA"/>
    <property type="match status" value="1"/>
</dbReference>
<dbReference type="PANTHER" id="PTHR21327:SF18">
    <property type="entry name" value="3,4-DIHYDROXY-2-BUTANONE 4-PHOSPHATE SYNTHASE"/>
    <property type="match status" value="1"/>
</dbReference>
<dbReference type="PANTHER" id="PTHR21327">
    <property type="entry name" value="GTP CYCLOHYDROLASE II-RELATED"/>
    <property type="match status" value="1"/>
</dbReference>
<dbReference type="Pfam" id="PF00925">
    <property type="entry name" value="GTP_cyclohydro2"/>
    <property type="match status" value="1"/>
</dbReference>
<dbReference type="SUPFAM" id="SSF142695">
    <property type="entry name" value="RibA-like"/>
    <property type="match status" value="1"/>
</dbReference>
<gene>
    <name evidence="1" type="primary">ribA</name>
    <name type="ordered locus">KPK_3161</name>
</gene>
<proteinExistence type="inferred from homology"/>